<feature type="chain" id="PRO_1000116910" description="Cobyric acid synthase">
    <location>
        <begin position="1"/>
        <end position="494"/>
    </location>
</feature>
<feature type="domain" description="GATase cobBQ-type" evidence="1">
    <location>
        <begin position="253"/>
        <end position="432"/>
    </location>
</feature>
<feature type="active site" description="Nucleophile" evidence="1">
    <location>
        <position position="334"/>
    </location>
</feature>
<feature type="active site" evidence="1">
    <location>
        <position position="424"/>
    </location>
</feature>
<evidence type="ECO:0000255" key="1">
    <source>
        <dbReference type="HAMAP-Rule" id="MF_00028"/>
    </source>
</evidence>
<reference key="1">
    <citation type="journal article" date="2009" name="Vaccine">
        <title>Whole genome sequence analysis of Mycobacterium bovis bacillus Calmette-Guerin (BCG) Tokyo 172: a comparative study of BCG vaccine substrains.</title>
        <authorList>
            <person name="Seki M."/>
            <person name="Honda I."/>
            <person name="Fujita I."/>
            <person name="Yano I."/>
            <person name="Yamamoto S."/>
            <person name="Koyama A."/>
        </authorList>
    </citation>
    <scope>NUCLEOTIDE SEQUENCE [LARGE SCALE GENOMIC DNA]</scope>
    <source>
        <strain>BCG / Tokyo 172 / ATCC 35737 / TMC 1019</strain>
    </source>
</reference>
<gene>
    <name evidence="1" type="primary">cobQ</name>
    <name type="ordered locus">JTY_0262</name>
</gene>
<accession>C1AJT1</accession>
<proteinExistence type="inferred from homology"/>
<organism>
    <name type="scientific">Mycobacterium bovis (strain BCG / Tokyo 172 / ATCC 35737 / TMC 1019)</name>
    <dbReference type="NCBI Taxonomy" id="561275"/>
    <lineage>
        <taxon>Bacteria</taxon>
        <taxon>Bacillati</taxon>
        <taxon>Actinomycetota</taxon>
        <taxon>Actinomycetes</taxon>
        <taxon>Mycobacteriales</taxon>
        <taxon>Mycobacteriaceae</taxon>
        <taxon>Mycobacterium</taxon>
        <taxon>Mycobacterium tuberculosis complex</taxon>
    </lineage>
</organism>
<dbReference type="EMBL" id="AP010918">
    <property type="protein sequence ID" value="BAH24560.1"/>
    <property type="molecule type" value="Genomic_DNA"/>
</dbReference>
<dbReference type="RefSeq" id="WP_003899877.1">
    <property type="nucleotide sequence ID" value="NZ_CP014566.1"/>
</dbReference>
<dbReference type="KEGG" id="mbt:JTY_0262"/>
<dbReference type="HOGENOM" id="CLU_019250_2_2_11"/>
<dbReference type="UniPathway" id="UPA00148"/>
<dbReference type="GO" id="GO:0015420">
    <property type="term" value="F:ABC-type vitamin B12 transporter activity"/>
    <property type="evidence" value="ECO:0007669"/>
    <property type="project" value="UniProtKB-UniRule"/>
</dbReference>
<dbReference type="GO" id="GO:0003824">
    <property type="term" value="F:catalytic activity"/>
    <property type="evidence" value="ECO:0007669"/>
    <property type="project" value="InterPro"/>
</dbReference>
<dbReference type="GO" id="GO:0009236">
    <property type="term" value="P:cobalamin biosynthetic process"/>
    <property type="evidence" value="ECO:0007669"/>
    <property type="project" value="UniProtKB-UniRule"/>
</dbReference>
<dbReference type="CDD" id="cd05389">
    <property type="entry name" value="CobQ_N"/>
    <property type="match status" value="1"/>
</dbReference>
<dbReference type="CDD" id="cd01750">
    <property type="entry name" value="GATase1_CobQ"/>
    <property type="match status" value="1"/>
</dbReference>
<dbReference type="Gene3D" id="3.40.50.880">
    <property type="match status" value="1"/>
</dbReference>
<dbReference type="Gene3D" id="3.40.50.300">
    <property type="entry name" value="P-loop containing nucleotide triphosphate hydrolases"/>
    <property type="match status" value="1"/>
</dbReference>
<dbReference type="HAMAP" id="MF_00028">
    <property type="entry name" value="CobQ"/>
    <property type="match status" value="1"/>
</dbReference>
<dbReference type="InterPro" id="IPR029062">
    <property type="entry name" value="Class_I_gatase-like"/>
</dbReference>
<dbReference type="InterPro" id="IPR002586">
    <property type="entry name" value="CobQ/CobB/MinD/ParA_Nub-bd_dom"/>
</dbReference>
<dbReference type="InterPro" id="IPR033949">
    <property type="entry name" value="CobQ_GATase1"/>
</dbReference>
<dbReference type="InterPro" id="IPR047045">
    <property type="entry name" value="CobQ_N"/>
</dbReference>
<dbReference type="InterPro" id="IPR004459">
    <property type="entry name" value="CobQ_synth"/>
</dbReference>
<dbReference type="InterPro" id="IPR011698">
    <property type="entry name" value="GATase_3"/>
</dbReference>
<dbReference type="InterPro" id="IPR027417">
    <property type="entry name" value="P-loop_NTPase"/>
</dbReference>
<dbReference type="NCBIfam" id="TIGR00313">
    <property type="entry name" value="cobQ"/>
    <property type="match status" value="1"/>
</dbReference>
<dbReference type="NCBIfam" id="NF001989">
    <property type="entry name" value="PRK00784.1"/>
    <property type="match status" value="1"/>
</dbReference>
<dbReference type="PANTHER" id="PTHR21343:SF1">
    <property type="entry name" value="COBYRIC ACID SYNTHASE"/>
    <property type="match status" value="1"/>
</dbReference>
<dbReference type="PANTHER" id="PTHR21343">
    <property type="entry name" value="DETHIOBIOTIN SYNTHETASE"/>
    <property type="match status" value="1"/>
</dbReference>
<dbReference type="Pfam" id="PF01656">
    <property type="entry name" value="CbiA"/>
    <property type="match status" value="1"/>
</dbReference>
<dbReference type="Pfam" id="PF07685">
    <property type="entry name" value="GATase_3"/>
    <property type="match status" value="1"/>
</dbReference>
<dbReference type="SUPFAM" id="SSF52317">
    <property type="entry name" value="Class I glutamine amidotransferase-like"/>
    <property type="match status" value="1"/>
</dbReference>
<dbReference type="SUPFAM" id="SSF52540">
    <property type="entry name" value="P-loop containing nucleoside triphosphate hydrolases"/>
    <property type="match status" value="1"/>
</dbReference>
<dbReference type="PROSITE" id="PS51274">
    <property type="entry name" value="GATASE_COBBQ"/>
    <property type="match status" value="1"/>
</dbReference>
<name>COBQ_MYCBT</name>
<keyword id="KW-0169">Cobalamin biosynthesis</keyword>
<keyword id="KW-0315">Glutamine amidotransferase</keyword>
<sequence length="494" mass="52135">MSGLLVAGTTSDAGKSAVTAGLCRALARRGVRVAPFKAQNMSNNSMVCRGPDGTGVEIGRAQWVQALAARTTPEAAMNPVLLKPASDHRSHVVLMGKPWGEVASSSWCAGRRALAEAACRAFDALAARYDVVVAEGAGSPAEINLRAGDYVNMGLARHAGLPTIVVGDIDRGGVFAAFLGTVALLAAEDQALVAGFVVNKFRGDSDLLAPGLRDLERVTGRRVYGTLPWHPDLWLDSEDALDLQGRRAAGTGARRVAVVRLPRISNFTDVDALGLEPDLDVVFASDPRALDDADLIVLPGTRATIADLAWLRARDLDRALLVHVAAGKPLLGICGGFQMLGRVIRDPYGIEGPGGQVTEVEGLGLLDVETAFSPHKVLRLPRGEGLGVPASGYEIHHGRITRGDTAEEFLGGARDGPVFGTMWHGSLEGDALREAFLRETLGLAPSGSCFLAARERRLDLLGDLVERHLDVDALLNLARHGCPPTLPFLAPGAP</sequence>
<comment type="function">
    <text evidence="1">Catalyzes amidations at positions B, D, E, and G on adenosylcobyrinic A,C-diamide. NH(2) groups are provided by glutamine, and one molecule of ATP is hydrogenolyzed for each amidation.</text>
</comment>
<comment type="pathway">
    <text evidence="1">Cofactor biosynthesis; adenosylcobalamin biosynthesis.</text>
</comment>
<comment type="similarity">
    <text evidence="1">Belongs to the CobB/CobQ family. CobQ subfamily.</text>
</comment>
<protein>
    <recommendedName>
        <fullName evidence="1">Cobyric acid synthase</fullName>
    </recommendedName>
</protein>